<keyword id="KW-0963">Cytoplasm</keyword>
<keyword id="KW-0479">Metal-binding</keyword>
<keyword id="KW-0539">Nucleus</keyword>
<keyword id="KW-0597">Phosphoprotein</keyword>
<keyword id="KW-1185">Reference proteome</keyword>
<keyword id="KW-0862">Zinc</keyword>
<keyword id="KW-0863">Zinc-finger</keyword>
<name>ZNHI3_MOUSE</name>
<accession>Q9CQK1</accession>
<gene>
    <name type="primary">Znhit3</name>
    <name type="synonym">Trip3</name>
</gene>
<reference key="1">
    <citation type="journal article" date="2005" name="Science">
        <title>The transcriptional landscape of the mammalian genome.</title>
        <authorList>
            <person name="Carninci P."/>
            <person name="Kasukawa T."/>
            <person name="Katayama S."/>
            <person name="Gough J."/>
            <person name="Frith M.C."/>
            <person name="Maeda N."/>
            <person name="Oyama R."/>
            <person name="Ravasi T."/>
            <person name="Lenhard B."/>
            <person name="Wells C."/>
            <person name="Kodzius R."/>
            <person name="Shimokawa K."/>
            <person name="Bajic V.B."/>
            <person name="Brenner S.E."/>
            <person name="Batalov S."/>
            <person name="Forrest A.R."/>
            <person name="Zavolan M."/>
            <person name="Davis M.J."/>
            <person name="Wilming L.G."/>
            <person name="Aidinis V."/>
            <person name="Allen J.E."/>
            <person name="Ambesi-Impiombato A."/>
            <person name="Apweiler R."/>
            <person name="Aturaliya R.N."/>
            <person name="Bailey T.L."/>
            <person name="Bansal M."/>
            <person name="Baxter L."/>
            <person name="Beisel K.W."/>
            <person name="Bersano T."/>
            <person name="Bono H."/>
            <person name="Chalk A.M."/>
            <person name="Chiu K.P."/>
            <person name="Choudhary V."/>
            <person name="Christoffels A."/>
            <person name="Clutterbuck D.R."/>
            <person name="Crowe M.L."/>
            <person name="Dalla E."/>
            <person name="Dalrymple B.P."/>
            <person name="de Bono B."/>
            <person name="Della Gatta G."/>
            <person name="di Bernardo D."/>
            <person name="Down T."/>
            <person name="Engstrom P."/>
            <person name="Fagiolini M."/>
            <person name="Faulkner G."/>
            <person name="Fletcher C.F."/>
            <person name="Fukushima T."/>
            <person name="Furuno M."/>
            <person name="Futaki S."/>
            <person name="Gariboldi M."/>
            <person name="Georgii-Hemming P."/>
            <person name="Gingeras T.R."/>
            <person name="Gojobori T."/>
            <person name="Green R.E."/>
            <person name="Gustincich S."/>
            <person name="Harbers M."/>
            <person name="Hayashi Y."/>
            <person name="Hensch T.K."/>
            <person name="Hirokawa N."/>
            <person name="Hill D."/>
            <person name="Huminiecki L."/>
            <person name="Iacono M."/>
            <person name="Ikeo K."/>
            <person name="Iwama A."/>
            <person name="Ishikawa T."/>
            <person name="Jakt M."/>
            <person name="Kanapin A."/>
            <person name="Katoh M."/>
            <person name="Kawasawa Y."/>
            <person name="Kelso J."/>
            <person name="Kitamura H."/>
            <person name="Kitano H."/>
            <person name="Kollias G."/>
            <person name="Krishnan S.P."/>
            <person name="Kruger A."/>
            <person name="Kummerfeld S.K."/>
            <person name="Kurochkin I.V."/>
            <person name="Lareau L.F."/>
            <person name="Lazarevic D."/>
            <person name="Lipovich L."/>
            <person name="Liu J."/>
            <person name="Liuni S."/>
            <person name="McWilliam S."/>
            <person name="Madan Babu M."/>
            <person name="Madera M."/>
            <person name="Marchionni L."/>
            <person name="Matsuda H."/>
            <person name="Matsuzawa S."/>
            <person name="Miki H."/>
            <person name="Mignone F."/>
            <person name="Miyake S."/>
            <person name="Morris K."/>
            <person name="Mottagui-Tabar S."/>
            <person name="Mulder N."/>
            <person name="Nakano N."/>
            <person name="Nakauchi H."/>
            <person name="Ng P."/>
            <person name="Nilsson R."/>
            <person name="Nishiguchi S."/>
            <person name="Nishikawa S."/>
            <person name="Nori F."/>
            <person name="Ohara O."/>
            <person name="Okazaki Y."/>
            <person name="Orlando V."/>
            <person name="Pang K.C."/>
            <person name="Pavan W.J."/>
            <person name="Pavesi G."/>
            <person name="Pesole G."/>
            <person name="Petrovsky N."/>
            <person name="Piazza S."/>
            <person name="Reed J."/>
            <person name="Reid J.F."/>
            <person name="Ring B.Z."/>
            <person name="Ringwald M."/>
            <person name="Rost B."/>
            <person name="Ruan Y."/>
            <person name="Salzberg S.L."/>
            <person name="Sandelin A."/>
            <person name="Schneider C."/>
            <person name="Schoenbach C."/>
            <person name="Sekiguchi K."/>
            <person name="Semple C.A."/>
            <person name="Seno S."/>
            <person name="Sessa L."/>
            <person name="Sheng Y."/>
            <person name="Shibata Y."/>
            <person name="Shimada H."/>
            <person name="Shimada K."/>
            <person name="Silva D."/>
            <person name="Sinclair B."/>
            <person name="Sperling S."/>
            <person name="Stupka E."/>
            <person name="Sugiura K."/>
            <person name="Sultana R."/>
            <person name="Takenaka Y."/>
            <person name="Taki K."/>
            <person name="Tammoja K."/>
            <person name="Tan S.L."/>
            <person name="Tang S."/>
            <person name="Taylor M.S."/>
            <person name="Tegner J."/>
            <person name="Teichmann S.A."/>
            <person name="Ueda H.R."/>
            <person name="van Nimwegen E."/>
            <person name="Verardo R."/>
            <person name="Wei C.L."/>
            <person name="Yagi K."/>
            <person name="Yamanishi H."/>
            <person name="Zabarovsky E."/>
            <person name="Zhu S."/>
            <person name="Zimmer A."/>
            <person name="Hide W."/>
            <person name="Bult C."/>
            <person name="Grimmond S.M."/>
            <person name="Teasdale R.D."/>
            <person name="Liu E.T."/>
            <person name="Brusic V."/>
            <person name="Quackenbush J."/>
            <person name="Wahlestedt C."/>
            <person name="Mattick J.S."/>
            <person name="Hume D.A."/>
            <person name="Kai C."/>
            <person name="Sasaki D."/>
            <person name="Tomaru Y."/>
            <person name="Fukuda S."/>
            <person name="Kanamori-Katayama M."/>
            <person name="Suzuki M."/>
            <person name="Aoki J."/>
            <person name="Arakawa T."/>
            <person name="Iida J."/>
            <person name="Imamura K."/>
            <person name="Itoh M."/>
            <person name="Kato T."/>
            <person name="Kawaji H."/>
            <person name="Kawagashira N."/>
            <person name="Kawashima T."/>
            <person name="Kojima M."/>
            <person name="Kondo S."/>
            <person name="Konno H."/>
            <person name="Nakano K."/>
            <person name="Ninomiya N."/>
            <person name="Nishio T."/>
            <person name="Okada M."/>
            <person name="Plessy C."/>
            <person name="Shibata K."/>
            <person name="Shiraki T."/>
            <person name="Suzuki S."/>
            <person name="Tagami M."/>
            <person name="Waki K."/>
            <person name="Watahiki A."/>
            <person name="Okamura-Oho Y."/>
            <person name="Suzuki H."/>
            <person name="Kawai J."/>
            <person name="Hayashizaki Y."/>
        </authorList>
    </citation>
    <scope>NUCLEOTIDE SEQUENCE [LARGE SCALE MRNA]</scope>
    <source>
        <strain>C57BL/6J</strain>
        <tissue>Embryo</tissue>
        <tissue>Head</tissue>
        <tissue>Kidney</tissue>
    </source>
</reference>
<reference key="2">
    <citation type="journal article" date="2009" name="PLoS Biol.">
        <title>Lineage-specific biology revealed by a finished genome assembly of the mouse.</title>
        <authorList>
            <person name="Church D.M."/>
            <person name="Goodstadt L."/>
            <person name="Hillier L.W."/>
            <person name="Zody M.C."/>
            <person name="Goldstein S."/>
            <person name="She X."/>
            <person name="Bult C.J."/>
            <person name="Agarwala R."/>
            <person name="Cherry J.L."/>
            <person name="DiCuccio M."/>
            <person name="Hlavina W."/>
            <person name="Kapustin Y."/>
            <person name="Meric P."/>
            <person name="Maglott D."/>
            <person name="Birtle Z."/>
            <person name="Marques A.C."/>
            <person name="Graves T."/>
            <person name="Zhou S."/>
            <person name="Teague B."/>
            <person name="Potamousis K."/>
            <person name="Churas C."/>
            <person name="Place M."/>
            <person name="Herschleb J."/>
            <person name="Runnheim R."/>
            <person name="Forrest D."/>
            <person name="Amos-Landgraf J."/>
            <person name="Schwartz D.C."/>
            <person name="Cheng Z."/>
            <person name="Lindblad-Toh K."/>
            <person name="Eichler E.E."/>
            <person name="Ponting C.P."/>
        </authorList>
    </citation>
    <scope>NUCLEOTIDE SEQUENCE [LARGE SCALE GENOMIC DNA]</scope>
    <source>
        <strain>C57BL/6J</strain>
    </source>
</reference>
<reference key="3">
    <citation type="journal article" date="2007" name="Proc. Natl. Acad. Sci. U.S.A.">
        <title>Large-scale phosphorylation analysis of mouse liver.</title>
        <authorList>
            <person name="Villen J."/>
            <person name="Beausoleil S.A."/>
            <person name="Gerber S.A."/>
            <person name="Gygi S.P."/>
        </authorList>
    </citation>
    <scope>IDENTIFICATION BY MASS SPECTROMETRY [LARGE SCALE ANALYSIS]</scope>
    <source>
        <tissue>Liver</tissue>
    </source>
</reference>
<reference key="4">
    <citation type="journal article" date="2010" name="Cell">
        <title>A tissue-specific atlas of mouse protein phosphorylation and expression.</title>
        <authorList>
            <person name="Huttlin E.L."/>
            <person name="Jedrychowski M.P."/>
            <person name="Elias J.E."/>
            <person name="Goswami T."/>
            <person name="Rad R."/>
            <person name="Beausoleil S.A."/>
            <person name="Villen J."/>
            <person name="Haas W."/>
            <person name="Sowa M.E."/>
            <person name="Gygi S.P."/>
        </authorList>
    </citation>
    <scope>PHOSPHORYLATION [LARGE SCALE ANALYSIS] AT SER-76</scope>
    <scope>IDENTIFICATION BY MASS SPECTROMETRY [LARGE SCALE ANALYSIS]</scope>
    <source>
        <tissue>Liver</tissue>
        <tissue>Pancreas</tissue>
        <tissue>Spleen</tissue>
    </source>
</reference>
<reference key="5">
    <citation type="journal article" date="2017" name="Brain">
        <title>ZNHIT3 is defective in PEHO syndrome, a severe encephalopathy with cerebellar granule neuron loss.</title>
        <authorList>
            <person name="Anttonen A.K."/>
            <person name="Laari A."/>
            <person name="Kousi M."/>
            <person name="Yang Y.J."/>
            <person name="Jaeaeskelaeinen T."/>
            <person name="Somer M."/>
            <person name="Siintola E."/>
            <person name="Jakkula E."/>
            <person name="Muona M."/>
            <person name="Tegelberg S."/>
            <person name="Loennqvist T."/>
            <person name="Pihko H."/>
            <person name="Valanne L."/>
            <person name="Paetau A."/>
            <person name="Lun M.P."/>
            <person name="Haestbacka J."/>
            <person name="Kopra O."/>
            <person name="Joensuu T."/>
            <person name="Katsanis N."/>
            <person name="Lehtinen M.K."/>
            <person name="Palvimo J.J."/>
            <person name="Lehesjoki A.E."/>
        </authorList>
    </citation>
    <scope>TISSUE SPECIFICITY</scope>
</reference>
<protein>
    <recommendedName>
        <fullName>Zinc finger HIT domain-containing protein 3</fullName>
    </recommendedName>
    <alternativeName>
        <fullName>Thyroid hormone receptor interactor 3</fullName>
    </alternativeName>
    <alternativeName>
        <fullName>Thyroid receptor-interacting protein 3</fullName>
        <shortName>TR-interacting protein 3</shortName>
        <shortName>TRIP-3</shortName>
    </alternativeName>
</protein>
<sequence length="151" mass="17068">MASLNCRTAVCVVCLEKPKYRCPTCRVPYCSVPCFQKHKEQCSSEARPVEKRRAGPPVRSEESKDDDSSVADFLNSDEEEDRVSLQNLKNLGESETLRSLLLNPHLRQLMISLDQGDNKAKLMRACMQEPLFVEFADCCLGIVEPSQKRDS</sequence>
<comment type="subunit">
    <text evidence="1">Thyroid receptor interacting proteins (TRIPs) specifically interact with the ligand binding domain of the thyroid receptor (TR) (By similarity). Requires the presence of thyroid hormone for its interaction (By similarity). Interacts with NUFIP1 (By similarity). Interacts (via HIT-type zinc finger) with the RUVBL1/RUVBL2 complex in the presence of ADP (By similarity).</text>
</comment>
<comment type="subcellular location">
    <subcellularLocation>
        <location evidence="1">Cytoplasm</location>
    </subcellularLocation>
    <subcellularLocation>
        <location evidence="1">Nucleus</location>
    </subcellularLocation>
</comment>
<comment type="tissue specificity">
    <text evidence="4">Expressed in the cerebellum.</text>
</comment>
<comment type="developmental stage">
    <text evidence="4">Detected in proliferating fetal granule cell precursors at embryonic day 16.5, in proliferating and post-mitotic granule cells at postnatal days 3 and 10. Expression in cerebellar Purkinje cells is strong at postnatal days 10 and 21.</text>
</comment>
<dbReference type="EMBL" id="AK014350">
    <property type="protein sequence ID" value="BAB29291.1"/>
    <property type="molecule type" value="mRNA"/>
</dbReference>
<dbReference type="EMBL" id="AK002888">
    <property type="protein sequence ID" value="BAB22434.1"/>
    <property type="molecule type" value="mRNA"/>
</dbReference>
<dbReference type="EMBL" id="AK003721">
    <property type="protein sequence ID" value="BAB22958.1"/>
    <property type="molecule type" value="mRNA"/>
</dbReference>
<dbReference type="EMBL" id="AK004259">
    <property type="protein sequence ID" value="BAB23239.1"/>
    <property type="molecule type" value="mRNA"/>
</dbReference>
<dbReference type="EMBL" id="AL645623">
    <property type="status" value="NOT_ANNOTATED_CDS"/>
    <property type="molecule type" value="Genomic_DNA"/>
</dbReference>
<dbReference type="CCDS" id="CCDS25189.1"/>
<dbReference type="RefSeq" id="NP_001005223.1">
    <property type="nucleotide sequence ID" value="NM_001005223.3"/>
</dbReference>
<dbReference type="SMR" id="Q9CQK1"/>
<dbReference type="BioGRID" id="243076">
    <property type="interactions" value="1"/>
</dbReference>
<dbReference type="FunCoup" id="Q9CQK1">
    <property type="interactions" value="2617"/>
</dbReference>
<dbReference type="IntAct" id="Q9CQK1">
    <property type="interactions" value="1"/>
</dbReference>
<dbReference type="MINT" id="Q9CQK1"/>
<dbReference type="STRING" id="10090.ENSMUSP00000099484"/>
<dbReference type="iPTMnet" id="Q9CQK1"/>
<dbReference type="PhosphoSitePlus" id="Q9CQK1"/>
<dbReference type="jPOST" id="Q9CQK1"/>
<dbReference type="PaxDb" id="10090-ENSMUSP00000099484"/>
<dbReference type="PeptideAtlas" id="Q9CQK1"/>
<dbReference type="ProteomicsDB" id="275152"/>
<dbReference type="Pumba" id="Q9CQK1"/>
<dbReference type="Antibodypedia" id="74086">
    <property type="antibodies" value="58 antibodies from 20 providers"/>
</dbReference>
<dbReference type="DNASU" id="448850"/>
<dbReference type="Ensembl" id="ENSMUST00000103195.5">
    <property type="protein sequence ID" value="ENSMUSP00000099484.5"/>
    <property type="gene ID" value="ENSMUSG00000020526.13"/>
</dbReference>
<dbReference type="GeneID" id="448850"/>
<dbReference type="KEGG" id="mmu:448850"/>
<dbReference type="UCSC" id="uc007kre.1">
    <property type="organism name" value="mouse"/>
</dbReference>
<dbReference type="AGR" id="MGI:3051596"/>
<dbReference type="CTD" id="9326"/>
<dbReference type="MGI" id="MGI:3051596">
    <property type="gene designation" value="Znhit3"/>
</dbReference>
<dbReference type="VEuPathDB" id="HostDB:ENSMUSG00000020526"/>
<dbReference type="eggNOG" id="KOG2857">
    <property type="taxonomic scope" value="Eukaryota"/>
</dbReference>
<dbReference type="GeneTree" id="ENSGT00390000010822"/>
<dbReference type="HOGENOM" id="CLU_117355_1_0_1"/>
<dbReference type="InParanoid" id="Q9CQK1"/>
<dbReference type="OMA" id="CNEAQSK"/>
<dbReference type="OrthoDB" id="18412at2759"/>
<dbReference type="PhylomeDB" id="Q9CQK1"/>
<dbReference type="TreeFam" id="TF324673"/>
<dbReference type="BioGRID-ORCS" id="448850">
    <property type="hits" value="18 hits in 81 CRISPR screens"/>
</dbReference>
<dbReference type="ChiTaRS" id="Znhit3">
    <property type="organism name" value="mouse"/>
</dbReference>
<dbReference type="PRO" id="PR:Q9CQK1"/>
<dbReference type="Proteomes" id="UP000000589">
    <property type="component" value="Chromosome 11"/>
</dbReference>
<dbReference type="RNAct" id="Q9CQK1">
    <property type="molecule type" value="protein"/>
</dbReference>
<dbReference type="Bgee" id="ENSMUSG00000020526">
    <property type="expression patterns" value="Expressed in spermatocyte and 246 other cell types or tissues"/>
</dbReference>
<dbReference type="GO" id="GO:0005737">
    <property type="term" value="C:cytoplasm"/>
    <property type="evidence" value="ECO:0000250"/>
    <property type="project" value="UniProtKB"/>
</dbReference>
<dbReference type="GO" id="GO:0005634">
    <property type="term" value="C:nucleus"/>
    <property type="evidence" value="ECO:0000250"/>
    <property type="project" value="UniProtKB"/>
</dbReference>
<dbReference type="GO" id="GO:0008270">
    <property type="term" value="F:zinc ion binding"/>
    <property type="evidence" value="ECO:0007669"/>
    <property type="project" value="UniProtKB-KW"/>
</dbReference>
<dbReference type="CDD" id="cd23024">
    <property type="entry name" value="zf-HIT_ZNHIT2-3"/>
    <property type="match status" value="1"/>
</dbReference>
<dbReference type="FunFam" id="3.30.60.190:FF:000002">
    <property type="entry name" value="Zinc finger HIT domain-containing protein 3"/>
    <property type="match status" value="1"/>
</dbReference>
<dbReference type="Gene3D" id="3.30.60.190">
    <property type="match status" value="1"/>
</dbReference>
<dbReference type="InterPro" id="IPR051639">
    <property type="entry name" value="BCD1"/>
</dbReference>
<dbReference type="InterPro" id="IPR007529">
    <property type="entry name" value="Znf_HIT"/>
</dbReference>
<dbReference type="InterPro" id="IPR048371">
    <property type="entry name" value="ZNHIT3_C"/>
</dbReference>
<dbReference type="PANTHER" id="PTHR13483">
    <property type="entry name" value="BOX C_D SNORNA PROTEIN 1-RELATED"/>
    <property type="match status" value="1"/>
</dbReference>
<dbReference type="PANTHER" id="PTHR13483:SF11">
    <property type="entry name" value="ZINC FINGER HIT DOMAIN-CONTAINING PROTEIN 3"/>
    <property type="match status" value="1"/>
</dbReference>
<dbReference type="Pfam" id="PF04438">
    <property type="entry name" value="zf-HIT"/>
    <property type="match status" value="1"/>
</dbReference>
<dbReference type="Pfam" id="PF21373">
    <property type="entry name" value="ZNHIT3_C"/>
    <property type="match status" value="1"/>
</dbReference>
<dbReference type="SUPFAM" id="SSF144232">
    <property type="entry name" value="HIT/MYND zinc finger-like"/>
    <property type="match status" value="1"/>
</dbReference>
<dbReference type="PROSITE" id="PS51083">
    <property type="entry name" value="ZF_HIT"/>
    <property type="match status" value="1"/>
</dbReference>
<organism>
    <name type="scientific">Mus musculus</name>
    <name type="common">Mouse</name>
    <dbReference type="NCBI Taxonomy" id="10090"/>
    <lineage>
        <taxon>Eukaryota</taxon>
        <taxon>Metazoa</taxon>
        <taxon>Chordata</taxon>
        <taxon>Craniata</taxon>
        <taxon>Vertebrata</taxon>
        <taxon>Euteleostomi</taxon>
        <taxon>Mammalia</taxon>
        <taxon>Eutheria</taxon>
        <taxon>Euarchontoglires</taxon>
        <taxon>Glires</taxon>
        <taxon>Rodentia</taxon>
        <taxon>Myomorpha</taxon>
        <taxon>Muroidea</taxon>
        <taxon>Muridae</taxon>
        <taxon>Murinae</taxon>
        <taxon>Mus</taxon>
        <taxon>Mus</taxon>
    </lineage>
</organism>
<feature type="chain" id="PRO_0000173552" description="Zinc finger HIT domain-containing protein 3">
    <location>
        <begin position="1"/>
        <end position="151"/>
    </location>
</feature>
<feature type="zinc finger region" description="HIT-type" evidence="2">
    <location>
        <begin position="11"/>
        <end position="42"/>
    </location>
</feature>
<feature type="region of interest" description="Disordered" evidence="3">
    <location>
        <begin position="43"/>
        <end position="81"/>
    </location>
</feature>
<feature type="compositionally biased region" description="Basic and acidic residues" evidence="3">
    <location>
        <begin position="43"/>
        <end position="53"/>
    </location>
</feature>
<feature type="compositionally biased region" description="Acidic residues" evidence="3">
    <location>
        <begin position="63"/>
        <end position="81"/>
    </location>
</feature>
<feature type="binding site" evidence="2">
    <location>
        <position position="11"/>
    </location>
    <ligand>
        <name>Zn(2+)</name>
        <dbReference type="ChEBI" id="CHEBI:29105"/>
        <label>1</label>
    </ligand>
</feature>
<feature type="binding site" evidence="2">
    <location>
        <position position="14"/>
    </location>
    <ligand>
        <name>Zn(2+)</name>
        <dbReference type="ChEBI" id="CHEBI:29105"/>
        <label>1</label>
    </ligand>
</feature>
<feature type="binding site" evidence="2">
    <location>
        <position position="22"/>
    </location>
    <ligand>
        <name>Zn(2+)</name>
        <dbReference type="ChEBI" id="CHEBI:29105"/>
        <label>2</label>
    </ligand>
</feature>
<feature type="binding site" evidence="2">
    <location>
        <position position="25"/>
    </location>
    <ligand>
        <name>Zn(2+)</name>
        <dbReference type="ChEBI" id="CHEBI:29105"/>
        <label>2</label>
    </ligand>
</feature>
<feature type="binding site" evidence="2">
    <location>
        <position position="30"/>
    </location>
    <ligand>
        <name>Zn(2+)</name>
        <dbReference type="ChEBI" id="CHEBI:29105"/>
        <label>1</label>
    </ligand>
</feature>
<feature type="binding site" evidence="2">
    <location>
        <position position="34"/>
    </location>
    <ligand>
        <name>Zn(2+)</name>
        <dbReference type="ChEBI" id="CHEBI:29105"/>
        <label>1</label>
    </ligand>
</feature>
<feature type="binding site" evidence="2">
    <location>
        <position position="38"/>
    </location>
    <ligand>
        <name>Zn(2+)</name>
        <dbReference type="ChEBI" id="CHEBI:29105"/>
        <label>2</label>
    </ligand>
</feature>
<feature type="binding site" evidence="2">
    <location>
        <position position="42"/>
    </location>
    <ligand>
        <name>Zn(2+)</name>
        <dbReference type="ChEBI" id="CHEBI:29105"/>
        <label>2</label>
    </ligand>
</feature>
<feature type="modified residue" description="Phosphoserine" evidence="5">
    <location>
        <position position="76"/>
    </location>
</feature>
<proteinExistence type="evidence at protein level"/>
<evidence type="ECO:0000250" key="1">
    <source>
        <dbReference type="UniProtKB" id="Q15649"/>
    </source>
</evidence>
<evidence type="ECO:0000255" key="2">
    <source>
        <dbReference type="PROSITE-ProRule" id="PRU00453"/>
    </source>
</evidence>
<evidence type="ECO:0000256" key="3">
    <source>
        <dbReference type="SAM" id="MobiDB-lite"/>
    </source>
</evidence>
<evidence type="ECO:0000269" key="4">
    <source>
    </source>
</evidence>
<evidence type="ECO:0007744" key="5">
    <source>
    </source>
</evidence>